<dbReference type="EC" id="5.4.2.11" evidence="1"/>
<dbReference type="EMBL" id="CP000975">
    <property type="protein sequence ID" value="ACD82658.1"/>
    <property type="molecule type" value="Genomic_DNA"/>
</dbReference>
<dbReference type="RefSeq" id="WP_012462940.1">
    <property type="nucleotide sequence ID" value="NC_010794.1"/>
</dbReference>
<dbReference type="SMR" id="B3DZZ7"/>
<dbReference type="STRING" id="481448.Minf_0600"/>
<dbReference type="KEGG" id="min:Minf_0600"/>
<dbReference type="eggNOG" id="COG0588">
    <property type="taxonomic scope" value="Bacteria"/>
</dbReference>
<dbReference type="HOGENOM" id="CLU_033323_1_1_0"/>
<dbReference type="OrthoDB" id="9781415at2"/>
<dbReference type="UniPathway" id="UPA00109">
    <property type="reaction ID" value="UER00186"/>
</dbReference>
<dbReference type="Proteomes" id="UP000009149">
    <property type="component" value="Chromosome"/>
</dbReference>
<dbReference type="GO" id="GO:0004619">
    <property type="term" value="F:phosphoglycerate mutase activity"/>
    <property type="evidence" value="ECO:0007669"/>
    <property type="project" value="UniProtKB-EC"/>
</dbReference>
<dbReference type="GO" id="GO:0006094">
    <property type="term" value="P:gluconeogenesis"/>
    <property type="evidence" value="ECO:0007669"/>
    <property type="project" value="UniProtKB-UniRule"/>
</dbReference>
<dbReference type="GO" id="GO:0006096">
    <property type="term" value="P:glycolytic process"/>
    <property type="evidence" value="ECO:0007669"/>
    <property type="project" value="UniProtKB-UniRule"/>
</dbReference>
<dbReference type="CDD" id="cd07067">
    <property type="entry name" value="HP_PGM_like"/>
    <property type="match status" value="1"/>
</dbReference>
<dbReference type="FunFam" id="3.40.50.1240:FF:000003">
    <property type="entry name" value="2,3-bisphosphoglycerate-dependent phosphoglycerate mutase"/>
    <property type="match status" value="1"/>
</dbReference>
<dbReference type="Gene3D" id="3.40.50.1240">
    <property type="entry name" value="Phosphoglycerate mutase-like"/>
    <property type="match status" value="1"/>
</dbReference>
<dbReference type="HAMAP" id="MF_01039">
    <property type="entry name" value="PGAM_GpmA"/>
    <property type="match status" value="1"/>
</dbReference>
<dbReference type="InterPro" id="IPR013078">
    <property type="entry name" value="His_Pase_superF_clade-1"/>
</dbReference>
<dbReference type="InterPro" id="IPR029033">
    <property type="entry name" value="His_PPase_superfam"/>
</dbReference>
<dbReference type="InterPro" id="IPR005952">
    <property type="entry name" value="Phosphogly_mut1"/>
</dbReference>
<dbReference type="NCBIfam" id="TIGR01258">
    <property type="entry name" value="pgm_1"/>
    <property type="match status" value="1"/>
</dbReference>
<dbReference type="NCBIfam" id="NF010713">
    <property type="entry name" value="PRK14115.1"/>
    <property type="match status" value="1"/>
</dbReference>
<dbReference type="PANTHER" id="PTHR11931">
    <property type="entry name" value="PHOSPHOGLYCERATE MUTASE"/>
    <property type="match status" value="1"/>
</dbReference>
<dbReference type="Pfam" id="PF00300">
    <property type="entry name" value="His_Phos_1"/>
    <property type="match status" value="2"/>
</dbReference>
<dbReference type="PIRSF" id="PIRSF000709">
    <property type="entry name" value="6PFK_2-Ptase"/>
    <property type="match status" value="1"/>
</dbReference>
<dbReference type="SMART" id="SM00855">
    <property type="entry name" value="PGAM"/>
    <property type="match status" value="1"/>
</dbReference>
<dbReference type="SUPFAM" id="SSF53254">
    <property type="entry name" value="Phosphoglycerate mutase-like"/>
    <property type="match status" value="1"/>
</dbReference>
<proteinExistence type="inferred from homology"/>
<accession>B3DZZ7</accession>
<evidence type="ECO:0000255" key="1">
    <source>
        <dbReference type="HAMAP-Rule" id="MF_01039"/>
    </source>
</evidence>
<gene>
    <name evidence="1" type="primary">gpmA</name>
    <name type="ordered locus">Minf_0600</name>
</gene>
<organism>
    <name type="scientific">Methylacidiphilum infernorum (isolate V4)</name>
    <name type="common">Methylokorus infernorum (strain V4)</name>
    <dbReference type="NCBI Taxonomy" id="481448"/>
    <lineage>
        <taxon>Bacteria</taxon>
        <taxon>Pseudomonadati</taxon>
        <taxon>Verrucomicrobiota</taxon>
        <taxon>Methylacidiphilae</taxon>
        <taxon>Methylacidiphilales</taxon>
        <taxon>Methylacidiphilaceae</taxon>
        <taxon>Methylacidiphilum (ex Ratnadevi et al. 2023)</taxon>
    </lineage>
</organism>
<reference key="1">
    <citation type="journal article" date="2008" name="Biol. Direct">
        <title>Complete genome sequence of the extremely acidophilic methanotroph isolate V4, Methylacidiphilum infernorum, a representative of the bacterial phylum Verrucomicrobia.</title>
        <authorList>
            <person name="Hou S."/>
            <person name="Makarova K.S."/>
            <person name="Saw J.H."/>
            <person name="Senin P."/>
            <person name="Ly B.V."/>
            <person name="Zhou Z."/>
            <person name="Ren Y."/>
            <person name="Wang J."/>
            <person name="Galperin M.Y."/>
            <person name="Omelchenko M.V."/>
            <person name="Wolf Y.I."/>
            <person name="Yutin N."/>
            <person name="Koonin E.V."/>
            <person name="Stott M.B."/>
            <person name="Mountain B.W."/>
            <person name="Crowe M.A."/>
            <person name="Smirnova A.V."/>
            <person name="Dunfield P.F."/>
            <person name="Feng L."/>
            <person name="Wang L."/>
            <person name="Alam M."/>
        </authorList>
    </citation>
    <scope>NUCLEOTIDE SEQUENCE [LARGE SCALE GENOMIC DNA]</scope>
    <source>
        <strain>Isolate V4</strain>
    </source>
</reference>
<feature type="chain" id="PRO_1000135958" description="2,3-bisphosphoglycerate-dependent phosphoglycerate mutase">
    <location>
        <begin position="1"/>
        <end position="248"/>
    </location>
</feature>
<feature type="active site" description="Tele-phosphohistidine intermediate" evidence="1">
    <location>
        <position position="8"/>
    </location>
</feature>
<feature type="active site" description="Proton donor/acceptor" evidence="1">
    <location>
        <position position="86"/>
    </location>
</feature>
<feature type="binding site" evidence="1">
    <location>
        <begin position="7"/>
        <end position="14"/>
    </location>
    <ligand>
        <name>substrate</name>
    </ligand>
</feature>
<feature type="binding site" evidence="1">
    <location>
        <begin position="20"/>
        <end position="21"/>
    </location>
    <ligand>
        <name>substrate</name>
    </ligand>
</feature>
<feature type="binding site" evidence="1">
    <location>
        <position position="59"/>
    </location>
    <ligand>
        <name>substrate</name>
    </ligand>
</feature>
<feature type="binding site" evidence="1">
    <location>
        <begin position="86"/>
        <end position="89"/>
    </location>
    <ligand>
        <name>substrate</name>
    </ligand>
</feature>
<feature type="binding site" evidence="1">
    <location>
        <position position="97"/>
    </location>
    <ligand>
        <name>substrate</name>
    </ligand>
</feature>
<feature type="binding site" evidence="1">
    <location>
        <begin position="113"/>
        <end position="114"/>
    </location>
    <ligand>
        <name>substrate</name>
    </ligand>
</feature>
<feature type="binding site" evidence="1">
    <location>
        <begin position="182"/>
        <end position="183"/>
    </location>
    <ligand>
        <name>substrate</name>
    </ligand>
</feature>
<feature type="site" description="Transition state stabilizer" evidence="1">
    <location>
        <position position="181"/>
    </location>
</feature>
<name>GPMA_METI4</name>
<protein>
    <recommendedName>
        <fullName evidence="1">2,3-bisphosphoglycerate-dependent phosphoglycerate mutase</fullName>
        <shortName evidence="1">BPG-dependent PGAM</shortName>
        <shortName evidence="1">PGAM</shortName>
        <shortName evidence="1">Phosphoglyceromutase</shortName>
        <shortName evidence="1">dPGM</shortName>
        <ecNumber evidence="1">5.4.2.11</ecNumber>
    </recommendedName>
</protein>
<comment type="function">
    <text evidence="1">Catalyzes the interconversion of 2-phosphoglycerate and 3-phosphoglycerate.</text>
</comment>
<comment type="catalytic activity">
    <reaction evidence="1">
        <text>(2R)-2-phosphoglycerate = (2R)-3-phosphoglycerate</text>
        <dbReference type="Rhea" id="RHEA:15901"/>
        <dbReference type="ChEBI" id="CHEBI:58272"/>
        <dbReference type="ChEBI" id="CHEBI:58289"/>
        <dbReference type="EC" id="5.4.2.11"/>
    </reaction>
</comment>
<comment type="pathway">
    <text evidence="1">Carbohydrate degradation; glycolysis; pyruvate from D-glyceraldehyde 3-phosphate: step 3/5.</text>
</comment>
<comment type="similarity">
    <text evidence="1">Belongs to the phosphoglycerate mutase family. BPG-dependent PGAM subfamily.</text>
</comment>
<keyword id="KW-0312">Gluconeogenesis</keyword>
<keyword id="KW-0324">Glycolysis</keyword>
<keyword id="KW-0413">Isomerase</keyword>
<sequence length="248" mass="28765">MKVVFLRHGESIWNRENRFTGWTDVDLSSRGIEEAENAARLLKEEGFEFDVAFCSVLKRAIRTLWIVLDKMDRMWIPVEKSWRLNERHYGALQGLNKSEMAKKYGEEQVLLWRRSYDIVPPRLENDDPRHPRFDPRYRSLPADELPAAESLKDTLERTVPYWKERIFPAILSGQKVLVSAHGNSIRALIKYIENMSEKEIVGLNIPTGFPLVYDLDEQGNKLACYYLGDLEEIEKAQHRVAAQGKASS</sequence>